<proteinExistence type="evidence at protein level"/>
<organism>
    <name type="scientific">Chlamydomonas reinhardtii</name>
    <name type="common">Chlamydomonas smithii</name>
    <dbReference type="NCBI Taxonomy" id="3055"/>
    <lineage>
        <taxon>Eukaryota</taxon>
        <taxon>Viridiplantae</taxon>
        <taxon>Chlorophyta</taxon>
        <taxon>core chlorophytes</taxon>
        <taxon>Chlorophyceae</taxon>
        <taxon>CS clade</taxon>
        <taxon>Chlamydomonadales</taxon>
        <taxon>Chlamydomonadaceae</taxon>
        <taxon>Chlamydomonas</taxon>
    </lineage>
</organism>
<keyword id="KW-0002">3D-structure</keyword>
<keyword id="KW-0966">Cell projection</keyword>
<keyword id="KW-0969">Cilium</keyword>
<keyword id="KW-0970">Cilium biogenesis/degradation</keyword>
<keyword id="KW-0175">Coiled coil</keyword>
<keyword id="KW-0963">Cytoplasm</keyword>
<keyword id="KW-0206">Cytoskeleton</keyword>
<keyword id="KW-0677">Repeat</keyword>
<keyword id="KW-0802">TPR repeat</keyword>
<gene>
    <name evidence="6" type="primary">CFAP46</name>
    <name evidence="5" type="synonym">FAP46</name>
    <name evidence="7" type="ORF">CHLREDRAFT_141109</name>
</gene>
<evidence type="ECO:0000255" key="1"/>
<evidence type="ECO:0000256" key="2">
    <source>
        <dbReference type="SAM" id="MobiDB-lite"/>
    </source>
</evidence>
<evidence type="ECO:0000269" key="3">
    <source>
    </source>
</evidence>
<evidence type="ECO:0000269" key="4">
    <source>
    </source>
</evidence>
<evidence type="ECO:0000303" key="5">
    <source>
    </source>
</evidence>
<evidence type="ECO:0000305" key="6"/>
<evidence type="ECO:0000312" key="7">
    <source>
        <dbReference type="EMBL" id="EDP06555.1"/>
    </source>
</evidence>
<accession>A8ICS9</accession>
<accession>J7FA96</accession>
<sequence length="2784" mass="289251">MAQPETLHQVLAQPADASRVKQLQTVHEAITASLSGQQPGARVGLETLVLCAEAALKVGSLDVAHDCLERYFLEQRRYTVGMAPVELRDQYLCRAHFARGLLVSERSKGLKGKALIDGTLEGVKHVMAGLEVAAANQPRYQFLVYNASVHHWRVVAPLHRDGLRHHLLASTDRVVQALDKVPGHEEWKVRIYTALALCQSDAATVAAAQAEAAGGKAPAKGGGGAAATHDDAAKTLQRAYDTAAAAKLTELQKDVARLQVHLATLAAAAGGKGAKAGGGGAAGGAGKPGAKGAAAALDEEGALRLIQAVLTGRPDRAVAEQQLREAVAKVDPKGPDGPVKGALLRPVSRAAWAAALAGLPELAERWASRAAASSDSGPRTWSDMTRVQLALQALGPAGDTSLAPVVVAAHVKALEQLEDVLTTFTKLADVEGIHAAARLAWNAGLLLLQPGLRKHVKRAFNAAARALAVAASPLTRLRAALHLEAGKCDAAEEALIKAGQEVGKALALDYLPPPAEAAAVPWLARPLDRWAAPLARALALRTSAEPANPEEEAVSLIERSKESRNPAIKSDLLARAREKLRDLPHPPPPAPTDPPGPDRDAAHAAARRRTAVWAELMRSAASSRMDEHVLAAAPHALCVSWDPAVDREMVLLQAQLAHYEAEAAISALRRRRADISPPTRPSPPEVDGEGVRQPPATTEQLQELVVQASVRSMRGAMSVNEPWLTLNNAVQLYNAALPLMQQHRYADLYRWLRPVAEALVALPVADSDGPLAVAVAEALGRAAEHRLLLATLRAKAARDAGQELEDDDDEDSLDEDGNPPPAGDAGPHFNRRSPAYKPLPDARVAASGLDPRGFPALARLLASIGTVTAVAEAALERAGGASTQGLLEMYARLQQYRGVSSGLPAGAAAASAATSRVVSAIEALSSANRVNEEKQPAGAGAEKGGGDKGRKPHGSLAADAAAAIALLRALPGGPPLELWAKMARAVADAGVWPAALECSAAALAALPGAGRDLDVLRLEAPSDVPEMTPAGWFWASVALSVRAAALLTLVDLPSQGAATALTVRREALLHAAQAARCAAFVNKADLCESACRVAWNAALPFTTKPLLRAALIRPLGTAVEALNRVGPADKGFQVRMNCLYVESLAAAKRWGDAVAACDAASRAVKSRSLHRPLMGWKAACLAMLGKNVNAEMTKVKEHPPEAQAYAWSVLSHHSAARYDQIAAHKAAGEAVEHHGWLKAVALAGYAEWLLSSSDDKEAAEDALLAAADALLEFDTGDLDGDGTDDEDDATKAKPRSRSGGGSSSGRAGGGFRRVLSRSYSRGGGGSADGARPSEGGEGAGPAAPDPNRVPEELGSTHLERLARLYVMACQAAPNATDHTDYMLAAHHNFMRLLTQALHSAAHTAFVAARDSYNGEVAAAALEGRDPPPETPLPKPYAVVPDTLIGWGTWQITPELLETLASDAATGAVTALSRELLPQAELTLAYLELLQACLRARGYHCHCLGLAQLQRVLARMVLRDEGMYVATSLGLVAALDELGLSREAGEVEAALGDVACIGPQEEAQAAEQAALADLVLAAAGKLEAARPRSALAVGRLSFLAGGVRRANNAANAAAAAPLPPVAAASQAAAAADAAAAASFTAAGGGRGGRESPSPHDDGIHYIGGPAPGDSHGQLPEWMEDAARELGNVDLAGSAGGLLSHVSGQLLLRPFTLHDVWLKKGDYLLRRGHYAAARQLLSRARAHAADCGNREAEARCLLALSRTELAAHNPVEAVALVQAAQRFGGDIDFWAELLVQYVDCRLAGAHSTTSDAREALQGGIAMFLALARDDRAAEKPASAAGAVLRVRLARLLLTDMEMLRGQGVSTWRKSYDGAVTLVNQAIMALAAREAGLPHIEALLVQAELMLAEPTHIKDLRPRLKKVEKVLLAAEEMAVRFHAEATPRDLAPRCVTPTARLLACVRCRLAEVQLAAAEERERLAGADREKARPKFPHMRGKRDVQVVIDFIDEAGGAPPAPPGLLPEDSALALATGAAALVAAAPRDRARALLIAGRCLAFKFMMAAPEALDPLRPFVPPPKPPGAPKRPPAGAEEEEDEEGPDTAAADAAAEAAEAAATPEGAAALRLQAQAAAMLSSALASATSVQDWALGEQCALALSTLYGQLSPGLACRSLAAAQACRAAAGGQALLRAAAPAQQPEVLALAQRDKLSEVLPAPQDNVHYSALRRMLSGLKGAAARLDAAAAPPVEQQLAALPQDLRVLMLYLSPDGGRLYAAALNIPDATAEPTPPLNAEKSKKKTDASAPAAAGPRLSLLHVVEVDPAAVEALVAECRAYRRGVERTLREAIASAAAKGVGVPPEDDRPDSPSKKGKKPGSATKRPGSKQGPKSGPGAAAAAAAAAAAAGEAGKVQVFDSRLNEEWSGILEQFEEWLAPLAPWLEAAVPALPLPPPGSPDGKKEKKDKKEAAGPTKHKVALLLDPALQSLPWEAARHLATTCSEVSRSPSLQALAACHTLPRADSAAASEHAAAAAAAPAALPPLDLGRLTVIVDPRHECSTAQQARGPYTAQLIPALSAPELTQVLPAASWWGPGGPGGGLEGVPGRAPSPDTYASLLAGQATGGPCTGLLFLGVGRFAAHVPPAVLASAPLGGCEAALLFDRCNTDDAYWAQLYRDNRKSAEQRRLESPGRVATLLLAKGVRTVLVMSAAAPPAAVVKLMHGVMAGLAAGRVLGEVVYSLLTGGGGSGGAGAGVLDEFELAHLRACLQVWGAPGLLGAVLTQGNKAAKGAKK</sequence>
<protein>
    <recommendedName>
        <fullName evidence="6">Cilia- and flagella-associated protein 46</fullName>
    </recommendedName>
</protein>
<name>CFA46_CHLRE</name>
<feature type="chain" id="PRO_0000431701" description="Cilia- and flagella-associated protein 46">
    <location>
        <begin position="1"/>
        <end position="2784"/>
    </location>
</feature>
<feature type="repeat" description="TPR 1" evidence="1">
    <location>
        <begin position="129"/>
        <end position="162"/>
    </location>
</feature>
<feature type="repeat" description="TPR 2" evidence="1">
    <location>
        <begin position="401"/>
        <end position="434"/>
    </location>
</feature>
<feature type="repeat" description="TPR 3" evidence="1">
    <location>
        <begin position="708"/>
        <end position="743"/>
    </location>
</feature>
<feature type="repeat" description="TPR 4" evidence="1">
    <location>
        <begin position="976"/>
        <end position="1009"/>
    </location>
</feature>
<feature type="repeat" description="TPR 5" evidence="1">
    <location>
        <begin position="1712"/>
        <end position="1745"/>
    </location>
</feature>
<feature type="repeat" description="TPR 6" evidence="1">
    <location>
        <begin position="1854"/>
        <end position="1886"/>
    </location>
</feature>
<feature type="repeat" description="TPR 7" evidence="1">
    <location>
        <begin position="2613"/>
        <end position="2646"/>
    </location>
</feature>
<feature type="region of interest" description="Disordered" evidence="2">
    <location>
        <begin position="543"/>
        <end position="562"/>
    </location>
</feature>
<feature type="region of interest" description="Disordered" evidence="2">
    <location>
        <begin position="581"/>
        <end position="607"/>
    </location>
</feature>
<feature type="region of interest" description="Disordered" evidence="2">
    <location>
        <begin position="670"/>
        <end position="697"/>
    </location>
</feature>
<feature type="region of interest" description="Disordered" evidence="2">
    <location>
        <begin position="799"/>
        <end position="837"/>
    </location>
</feature>
<feature type="region of interest" description="Disordered" evidence="2">
    <location>
        <begin position="929"/>
        <end position="954"/>
    </location>
</feature>
<feature type="region of interest" description="Disordered" evidence="2">
    <location>
        <begin position="1275"/>
        <end position="1351"/>
    </location>
</feature>
<feature type="region of interest" description="Disordered" evidence="2">
    <location>
        <begin position="1640"/>
        <end position="1673"/>
    </location>
</feature>
<feature type="region of interest" description="Disordered" evidence="2">
    <location>
        <begin position="2068"/>
        <end position="2112"/>
    </location>
</feature>
<feature type="region of interest" description="Disordered" evidence="2">
    <location>
        <begin position="2278"/>
        <end position="2303"/>
    </location>
</feature>
<feature type="region of interest" description="Disordered" evidence="2">
    <location>
        <begin position="2346"/>
        <end position="2389"/>
    </location>
</feature>
<feature type="region of interest" description="Disordered" evidence="2">
    <location>
        <begin position="2441"/>
        <end position="2465"/>
    </location>
</feature>
<feature type="coiled-coil region" evidence="1">
    <location>
        <begin position="242"/>
        <end position="268"/>
    </location>
</feature>
<feature type="coiled-coil region" evidence="1">
    <location>
        <begin position="644"/>
        <end position="665"/>
    </location>
</feature>
<feature type="coiled-coil region" evidence="1">
    <location>
        <begin position="1961"/>
        <end position="1984"/>
    </location>
</feature>
<feature type="compositionally biased region" description="Pro residues" evidence="2">
    <location>
        <begin position="585"/>
        <end position="595"/>
    </location>
</feature>
<feature type="compositionally biased region" description="Acidic residues" evidence="2">
    <location>
        <begin position="802"/>
        <end position="817"/>
    </location>
</feature>
<feature type="compositionally biased region" description="Acidic residues" evidence="2">
    <location>
        <begin position="1275"/>
        <end position="1288"/>
    </location>
</feature>
<feature type="compositionally biased region" description="Gly residues" evidence="2">
    <location>
        <begin position="1298"/>
        <end position="1311"/>
    </location>
</feature>
<feature type="compositionally biased region" description="Basic and acidic residues" evidence="2">
    <location>
        <begin position="1646"/>
        <end position="1658"/>
    </location>
</feature>
<feature type="compositionally biased region" description="Pro residues" evidence="2">
    <location>
        <begin position="2069"/>
        <end position="2083"/>
    </location>
</feature>
<feature type="compositionally biased region" description="Acidic residues" evidence="2">
    <location>
        <begin position="2087"/>
        <end position="2096"/>
    </location>
</feature>
<feature type="compositionally biased region" description="Low complexity" evidence="2">
    <location>
        <begin position="2097"/>
        <end position="2112"/>
    </location>
</feature>
<feature type="compositionally biased region" description="Low complexity" evidence="2">
    <location>
        <begin position="2378"/>
        <end position="2389"/>
    </location>
</feature>
<feature type="compositionally biased region" description="Basic and acidic residues" evidence="2">
    <location>
        <begin position="2450"/>
        <end position="2461"/>
    </location>
</feature>
<feature type="sequence conflict" description="In Ref. 1; AFG30956." evidence="6" ref="1">
    <original>K</original>
    <variation>E</variation>
    <location>
        <position position="57"/>
    </location>
</feature>
<feature type="sequence conflict" description="In Ref. 1; AFG30956." evidence="6" ref="1">
    <original>D</original>
    <variation>E</variation>
    <location>
        <position position="172"/>
    </location>
</feature>
<feature type="sequence conflict" description="In Ref. 1; AFG30956." evidence="6" ref="1">
    <original>A</original>
    <variation>V</variation>
    <location>
        <position position="210"/>
    </location>
</feature>
<feature type="sequence conflict" description="In Ref. 1; AFG30956." evidence="6" ref="1">
    <original>E</original>
    <variation>D</variation>
    <location>
        <position position="361"/>
    </location>
</feature>
<feature type="sequence conflict" description="In Ref. 1; AFG30956." evidence="6" ref="1">
    <original>A</original>
    <variation>T</variation>
    <location>
        <position position="524"/>
    </location>
</feature>
<feature type="sequence conflict" description="In Ref. 1; AFG30956." evidence="6" ref="1">
    <original>E</original>
    <variation>K</variation>
    <location>
        <position position="551"/>
    </location>
</feature>
<feature type="sequence conflict" description="In Ref. 1; AFG30956." evidence="6" ref="1">
    <original>D</original>
    <variation>A</variation>
    <location>
        <position position="642"/>
    </location>
</feature>
<feature type="sequence conflict" description="In Ref. 1; AFG30956." evidence="6" ref="1">
    <original>R</original>
    <variation>Q</variation>
    <location>
        <position position="671"/>
    </location>
</feature>
<feature type="sequence conflict" description="In Ref. 1; AFG30956." evidence="6" ref="1">
    <original>T</original>
    <variation>A</variation>
    <location>
        <position position="725"/>
    </location>
</feature>
<feature type="sequence conflict" description="In Ref. 1; AFG30956." evidence="6" ref="1">
    <original>S</original>
    <variation>L</variation>
    <location>
        <position position="925"/>
    </location>
</feature>
<feature type="sequence conflict" description="In Ref. 1; AFG30956." evidence="6" ref="1">
    <original>G</original>
    <variation>D</variation>
    <location>
        <position position="1056"/>
    </location>
</feature>
<feature type="sequence conflict" description="In Ref. 1; AFG30956." evidence="6" ref="1">
    <original>R</original>
    <variation>W</variation>
    <location>
        <position position="1135"/>
    </location>
</feature>
<feature type="sequence conflict" description="In Ref. 1; AFG30956." evidence="6" ref="1">
    <original>A</original>
    <variation>S</variation>
    <location>
        <position position="1155"/>
    </location>
</feature>
<feature type="sequence conflict" description="In Ref. 1; AFG30956." evidence="6" ref="1">
    <original>K</original>
    <variation>N</variation>
    <location>
        <position position="1165"/>
    </location>
</feature>
<feature type="sequence conflict" description="In Ref. 1; AFG30956." evidence="6" ref="1">
    <original>G</original>
    <variation>A</variation>
    <location>
        <position position="1414"/>
    </location>
</feature>
<feature type="sequence conflict" description="In Ref. 1; AFG30956." evidence="6" ref="1">
    <original>V</original>
    <variation>A</variation>
    <location>
        <position position="1438"/>
    </location>
</feature>
<feature type="sequence conflict" description="In Ref. 1; AFG30956." evidence="6" ref="1">
    <original>A</original>
    <variation>D</variation>
    <location>
        <position position="1830"/>
    </location>
</feature>
<feature type="sequence conflict" description="In Ref. 1; AFG30956." evidence="6" ref="1">
    <original>E</original>
    <variation>D</variation>
    <location>
        <position position="1906"/>
    </location>
</feature>
<feature type="sequence conflict" description="In Ref. 1; AFG30956." evidence="6" ref="1">
    <original>C</original>
    <variation>R</variation>
    <location>
        <position position="1957"/>
    </location>
</feature>
<feature type="sequence conflict" description="In Ref. 1; AFG30956." evidence="6" ref="1">
    <original>A</original>
    <variation>S</variation>
    <location>
        <position position="2053"/>
    </location>
</feature>
<feature type="sequence conflict" description="In Ref. 1; AFG30956." evidence="6" ref="1">
    <original>E</original>
    <variation>EED</variation>
    <location>
        <position position="2093"/>
    </location>
</feature>
<feature type="sequence conflict" description="In Ref. 1; AFG30956." evidence="6" ref="1">
    <original>SAAAK</original>
    <variation>PAAAR</variation>
    <location>
        <begin position="2344"/>
        <end position="2348"/>
    </location>
</feature>
<feature type="sequence conflict" description="In Ref. 1; AFG30956." evidence="6" ref="1">
    <original>R</original>
    <variation>G</variation>
    <location>
        <position position="2375"/>
    </location>
</feature>
<feature type="sequence conflict" description="In Ref. 1; AFG30956." evidence="6" ref="1">
    <original>V</original>
    <variation>A</variation>
    <location>
        <position position="2405"/>
    </location>
</feature>
<feature type="sequence conflict" description="In Ref. 1; AFG30956." evidence="6" ref="1">
    <original>G</original>
    <variation>S</variation>
    <location>
        <position position="2447"/>
    </location>
</feature>
<feature type="sequence conflict" description="In Ref. 1; AFG30956." evidence="6" ref="1">
    <original>T</original>
    <variation>N</variation>
    <location>
        <position position="2491"/>
    </location>
</feature>
<feature type="sequence conflict" description="In Ref. 1; AFG30956." evidence="6" ref="1">
    <original>SAAA</original>
    <variation>AAAT</variation>
    <location>
        <begin position="2515"/>
        <end position="2518"/>
    </location>
</feature>
<feature type="sequence conflict" description="In Ref. 1; AFG30956." evidence="6" ref="1">
    <original>D</original>
    <variation>E</variation>
    <location>
        <position position="2659"/>
    </location>
</feature>
<feature type="sequence conflict" description="In Ref. 1; AFG30956." evidence="6" ref="1">
    <original>V</original>
    <variation>A</variation>
    <location>
        <position position="2693"/>
    </location>
</feature>
<feature type="sequence conflict" description="In Ref. 1; AFG30956." evidence="6" ref="1">
    <original>V</original>
    <variation>A</variation>
    <location>
        <position position="2724"/>
    </location>
</feature>
<feature type="sequence conflict" description="In Ref. 1; AFG30956." evidence="6" ref="1">
    <original>G</original>
    <variation>S</variation>
    <location>
        <position position="2743"/>
    </location>
</feature>
<reference key="1">
    <citation type="journal article" date="2012" name="J. Cell Sci.">
        <title>A FAP46 mutant provides new insights into the function and assembly of the C1d complex of the ciliary central apparatus.</title>
        <authorList>
            <person name="Brown J.M."/>
            <person name="DiPetrillo C.G."/>
            <person name="Smith E.F."/>
            <person name="Witman G.B."/>
        </authorList>
    </citation>
    <scope>NUCLEOTIDE SEQUENCE [MRNA]</scope>
    <scope>FUNCTION</scope>
    <scope>SUBUNIT</scope>
    <scope>SUBCELLULAR LOCATION</scope>
</reference>
<reference key="2">
    <citation type="journal article" date="2007" name="Science">
        <title>The Chlamydomonas genome reveals the evolution of key animal and plant functions.</title>
        <authorList>
            <person name="Merchant S.S."/>
            <person name="Prochnik S.E."/>
            <person name="Vallon O."/>
            <person name="Harris E.H."/>
            <person name="Karpowicz S.J."/>
            <person name="Witman G.B."/>
            <person name="Terry A."/>
            <person name="Salamov A."/>
            <person name="Fritz-Laylin L.K."/>
            <person name="Marechal-Drouard L."/>
            <person name="Marshall W.F."/>
            <person name="Qu L.H."/>
            <person name="Nelson D.R."/>
            <person name="Sanderfoot A.A."/>
            <person name="Spalding M.H."/>
            <person name="Kapitonov V.V."/>
            <person name="Ren Q."/>
            <person name="Ferris P."/>
            <person name="Lindquist E."/>
            <person name="Shapiro H."/>
            <person name="Lucas S.M."/>
            <person name="Grimwood J."/>
            <person name="Schmutz J."/>
            <person name="Cardol P."/>
            <person name="Cerutti H."/>
            <person name="Chanfreau G."/>
            <person name="Chen C.L."/>
            <person name="Cognat V."/>
            <person name="Croft M.T."/>
            <person name="Dent R."/>
            <person name="Dutcher S."/>
            <person name="Fernandez E."/>
            <person name="Fukuzawa H."/>
            <person name="Gonzalez-Ballester D."/>
            <person name="Gonzalez-Halphen D."/>
            <person name="Hallmann A."/>
            <person name="Hanikenne M."/>
            <person name="Hippler M."/>
            <person name="Inwood W."/>
            <person name="Jabbari K."/>
            <person name="Kalanon M."/>
            <person name="Kuras R."/>
            <person name="Lefebvre P.A."/>
            <person name="Lemaire S.D."/>
            <person name="Lobanov A.V."/>
            <person name="Lohr M."/>
            <person name="Manuell A."/>
            <person name="Meier I."/>
            <person name="Mets L."/>
            <person name="Mittag M."/>
            <person name="Mittelmeier T."/>
            <person name="Moroney J.V."/>
            <person name="Moseley J."/>
            <person name="Napoli C."/>
            <person name="Nedelcu A.M."/>
            <person name="Niyogi K."/>
            <person name="Novoselov S.V."/>
            <person name="Paulsen I.T."/>
            <person name="Pazour G.J."/>
            <person name="Purton S."/>
            <person name="Ral J.P."/>
            <person name="Riano-Pachon D.M."/>
            <person name="Riekhof W."/>
            <person name="Rymarquis L."/>
            <person name="Schroda M."/>
            <person name="Stern D."/>
            <person name="Umen J."/>
            <person name="Willows R."/>
            <person name="Wilson N."/>
            <person name="Zimmer S.L."/>
            <person name="Allmer J."/>
            <person name="Balk J."/>
            <person name="Bisova K."/>
            <person name="Chen C.J."/>
            <person name="Elias M."/>
            <person name="Gendler K."/>
            <person name="Hauser C."/>
            <person name="Lamb M.R."/>
            <person name="Ledford H."/>
            <person name="Long J.C."/>
            <person name="Minagawa J."/>
            <person name="Page M.D."/>
            <person name="Pan J."/>
            <person name="Pootakham W."/>
            <person name="Roje S."/>
            <person name="Rose A."/>
            <person name="Stahlberg E."/>
            <person name="Terauchi A.M."/>
            <person name="Yang P."/>
            <person name="Ball S."/>
            <person name="Bowler C."/>
            <person name="Dieckmann C.L."/>
            <person name="Gladyshev V.N."/>
            <person name="Green P."/>
            <person name="Jorgensen R."/>
            <person name="Mayfield S."/>
            <person name="Mueller-Roeber B."/>
            <person name="Rajamani S."/>
            <person name="Sayre R.T."/>
            <person name="Brokstein P."/>
            <person name="Dubchak I."/>
            <person name="Goodstein D."/>
            <person name="Hornick L."/>
            <person name="Huang Y.W."/>
            <person name="Jhaveri J."/>
            <person name="Luo Y."/>
            <person name="Martinez D."/>
            <person name="Ngau W.C."/>
            <person name="Otillar B."/>
            <person name="Poliakov A."/>
            <person name="Porter A."/>
            <person name="Szajkowski L."/>
            <person name="Werner G."/>
            <person name="Zhou K."/>
            <person name="Grigoriev I.V."/>
            <person name="Rokhsar D.S."/>
            <person name="Grossman A.R."/>
        </authorList>
    </citation>
    <scope>NUCLEOTIDE SEQUENCE [LARGE SCALE GENOMIC DNA]</scope>
    <source>
        <strain>CC-503</strain>
    </source>
</reference>
<reference key="3">
    <citation type="journal article" date="2010" name="J. Cell Biol.">
        <title>Pcdp1 is a central apparatus protein that binds Ca2+-calmodulin and regulates ciliary motility.</title>
        <authorList>
            <person name="DiPetrillo C.G."/>
            <person name="Smith E.F."/>
        </authorList>
    </citation>
    <scope>SUBUNIT</scope>
    <scope>SUBCELLULAR LOCATION</scope>
</reference>
<comment type="function">
    <text evidence="4">As part of the central apparatus of the cilium axoneme plays a role in cilium movement and thereby cell motility.</text>
</comment>
<comment type="subunit">
    <text evidence="3 4">Part of the PDCP1 complex composed of CFAP46, CFAP54, CFAP74 and CFAP221; the PDCP1 complex binds calmodulin.</text>
</comment>
<comment type="subcellular location">
    <subcellularLocation>
        <location evidence="3 4">Cytoplasm</location>
        <location evidence="3 4">Cytoskeleton</location>
        <location evidence="3 4">Cilium axoneme</location>
    </subcellularLocation>
</comment>
<comment type="similarity">
    <text evidence="6">Belongs to the CFAP46 family.</text>
</comment>
<dbReference type="EMBL" id="JF827824">
    <property type="protein sequence ID" value="AFG30956.1"/>
    <property type="molecule type" value="mRNA"/>
</dbReference>
<dbReference type="EMBL" id="DS496115">
    <property type="protein sequence ID" value="EDP06555.1"/>
    <property type="molecule type" value="Genomic_DNA"/>
</dbReference>
<dbReference type="RefSeq" id="XP_001702776.1">
    <property type="nucleotide sequence ID" value="XM_001702724.1"/>
</dbReference>
<dbReference type="PDB" id="7N6G">
    <property type="method" value="EM"/>
    <property type="resolution" value="3.60 A"/>
    <property type="chains" value="1N=1-2784"/>
</dbReference>
<dbReference type="PDB" id="7SQC">
    <property type="method" value="EM"/>
    <property type="resolution" value="3.80 A"/>
    <property type="chains" value="R0/R1=1-2784"/>
</dbReference>
<dbReference type="PDBsum" id="7N6G"/>
<dbReference type="PDBsum" id="7SQC"/>
<dbReference type="EMDB" id="EMD-24207"/>
<dbReference type="EMDB" id="EMD-25381"/>
<dbReference type="SMR" id="A8ICS9"/>
<dbReference type="PaxDb" id="3055-EDP06555"/>
<dbReference type="EnsemblPlants" id="PNW77067">
    <property type="protein sequence ID" value="PNW77067"/>
    <property type="gene ID" value="CHLRE_10g420800v5"/>
</dbReference>
<dbReference type="GeneID" id="5728279"/>
<dbReference type="Gramene" id="PNW77067">
    <property type="protein sequence ID" value="PNW77067"/>
    <property type="gene ID" value="CHLRE_10g420800v5"/>
</dbReference>
<dbReference type="KEGG" id="cre:CHLRE_10g420800v5"/>
<dbReference type="eggNOG" id="ENOG502QS2Z">
    <property type="taxonomic scope" value="Eukaryota"/>
</dbReference>
<dbReference type="HOGENOM" id="CLU_226927_0_0_1"/>
<dbReference type="OMA" id="EEFWYNS"/>
<dbReference type="OrthoDB" id="68437at2759"/>
<dbReference type="GO" id="GO:1990716">
    <property type="term" value="C:axonemal central apparatus"/>
    <property type="evidence" value="ECO:0000314"/>
    <property type="project" value="UniProtKB"/>
</dbReference>
<dbReference type="GO" id="GO:0005930">
    <property type="term" value="C:axoneme"/>
    <property type="evidence" value="ECO:0000314"/>
    <property type="project" value="UniProtKB"/>
</dbReference>
<dbReference type="GO" id="GO:0035082">
    <property type="term" value="P:axoneme assembly"/>
    <property type="evidence" value="ECO:0000315"/>
    <property type="project" value="UniProtKB"/>
</dbReference>
<dbReference type="GO" id="GO:0060294">
    <property type="term" value="P:cilium movement involved in cell motility"/>
    <property type="evidence" value="ECO:0000315"/>
    <property type="project" value="UniProtKB"/>
</dbReference>
<dbReference type="InterPro" id="IPR039586">
    <property type="entry name" value="CFAP46"/>
</dbReference>
<dbReference type="PANTHER" id="PTHR15977">
    <property type="entry name" value="CILIA- AND FLAGELLA-ASSOCIATED PROTEIN 46"/>
    <property type="match status" value="1"/>
</dbReference>
<dbReference type="PANTHER" id="PTHR15977:SF15">
    <property type="entry name" value="CILIA- AND FLAGELLA-ASSOCIATED PROTEIN 46"/>
    <property type="match status" value="1"/>
</dbReference>
<dbReference type="Pfam" id="PF25439">
    <property type="entry name" value="TPR_CFAP46_N"/>
    <property type="match status" value="1"/>
</dbReference>